<dbReference type="EC" id="7.1.2.2" evidence="1"/>
<dbReference type="EMBL" id="AE015927">
    <property type="protein sequence ID" value="AAO35586.1"/>
    <property type="molecule type" value="Genomic_DNA"/>
</dbReference>
<dbReference type="SMR" id="Q896K4"/>
<dbReference type="STRING" id="212717.CTC_00999"/>
<dbReference type="KEGG" id="ctc:CTC_00999"/>
<dbReference type="HOGENOM" id="CLU_008162_3_1_9"/>
<dbReference type="Proteomes" id="UP000001412">
    <property type="component" value="Chromosome"/>
</dbReference>
<dbReference type="GO" id="GO:0045259">
    <property type="term" value="C:proton-transporting ATP synthase complex"/>
    <property type="evidence" value="ECO:0007669"/>
    <property type="project" value="UniProtKB-ARBA"/>
</dbReference>
<dbReference type="GO" id="GO:0005524">
    <property type="term" value="F:ATP binding"/>
    <property type="evidence" value="ECO:0007669"/>
    <property type="project" value="UniProtKB-UniRule"/>
</dbReference>
<dbReference type="GO" id="GO:0046933">
    <property type="term" value="F:proton-transporting ATP synthase activity, rotational mechanism"/>
    <property type="evidence" value="ECO:0007669"/>
    <property type="project" value="UniProtKB-UniRule"/>
</dbReference>
<dbReference type="GO" id="GO:0046961">
    <property type="term" value="F:proton-transporting ATPase activity, rotational mechanism"/>
    <property type="evidence" value="ECO:0007669"/>
    <property type="project" value="InterPro"/>
</dbReference>
<dbReference type="GO" id="GO:0042777">
    <property type="term" value="P:proton motive force-driven plasma membrane ATP synthesis"/>
    <property type="evidence" value="ECO:0007669"/>
    <property type="project" value="UniProtKB-UniRule"/>
</dbReference>
<dbReference type="CDD" id="cd18111">
    <property type="entry name" value="ATP-synt_V_A-type_alpha_C"/>
    <property type="match status" value="1"/>
</dbReference>
<dbReference type="CDD" id="cd18119">
    <property type="entry name" value="ATP-synt_V_A-type_alpha_N"/>
    <property type="match status" value="1"/>
</dbReference>
<dbReference type="CDD" id="cd01134">
    <property type="entry name" value="V_A-ATPase_A"/>
    <property type="match status" value="1"/>
</dbReference>
<dbReference type="FunFam" id="3.40.50.300:FF:000675">
    <property type="entry name" value="V-type ATP synthase alpha chain"/>
    <property type="match status" value="1"/>
</dbReference>
<dbReference type="FunFam" id="1.10.1140.10:FF:000002">
    <property type="entry name" value="V-type proton ATPase catalytic subunit A"/>
    <property type="match status" value="1"/>
</dbReference>
<dbReference type="FunFam" id="2.40.30.20:FF:000002">
    <property type="entry name" value="V-type proton ATPase catalytic subunit A"/>
    <property type="match status" value="1"/>
</dbReference>
<dbReference type="FunFam" id="2.40.50.100:FF:000008">
    <property type="entry name" value="V-type proton ATPase catalytic subunit A"/>
    <property type="match status" value="1"/>
</dbReference>
<dbReference type="Gene3D" id="2.40.30.20">
    <property type="match status" value="1"/>
</dbReference>
<dbReference type="Gene3D" id="2.40.50.100">
    <property type="match status" value="1"/>
</dbReference>
<dbReference type="Gene3D" id="1.10.1140.10">
    <property type="entry name" value="Bovine Mitochondrial F1-atpase, Atp Synthase Beta Chain, Chain D, domain 3"/>
    <property type="match status" value="1"/>
</dbReference>
<dbReference type="Gene3D" id="3.40.50.300">
    <property type="entry name" value="P-loop containing nucleotide triphosphate hydrolases"/>
    <property type="match status" value="1"/>
</dbReference>
<dbReference type="HAMAP" id="MF_00309">
    <property type="entry name" value="ATP_synth_A_arch"/>
    <property type="match status" value="1"/>
</dbReference>
<dbReference type="InterPro" id="IPR055190">
    <property type="entry name" value="ATP-synt_VA_C"/>
</dbReference>
<dbReference type="InterPro" id="IPR031686">
    <property type="entry name" value="ATP-synth_a_Xtn"/>
</dbReference>
<dbReference type="InterPro" id="IPR023366">
    <property type="entry name" value="ATP_synth_asu-like_sf"/>
</dbReference>
<dbReference type="InterPro" id="IPR020003">
    <property type="entry name" value="ATPase_a/bsu_AS"/>
</dbReference>
<dbReference type="InterPro" id="IPR004100">
    <property type="entry name" value="ATPase_F1/V1/A1_a/bsu_N"/>
</dbReference>
<dbReference type="InterPro" id="IPR036121">
    <property type="entry name" value="ATPase_F1/V1/A1_a/bsu_N_sf"/>
</dbReference>
<dbReference type="InterPro" id="IPR000194">
    <property type="entry name" value="ATPase_F1/V1/A1_a/bsu_nucl-bd"/>
</dbReference>
<dbReference type="InterPro" id="IPR024034">
    <property type="entry name" value="ATPase_F1/V1_b/a_C"/>
</dbReference>
<dbReference type="InterPro" id="IPR027417">
    <property type="entry name" value="P-loop_NTPase"/>
</dbReference>
<dbReference type="InterPro" id="IPR022878">
    <property type="entry name" value="V-ATPase_asu"/>
</dbReference>
<dbReference type="NCBIfam" id="NF003220">
    <property type="entry name" value="PRK04192.1"/>
    <property type="match status" value="1"/>
</dbReference>
<dbReference type="PANTHER" id="PTHR43607:SF1">
    <property type="entry name" value="H(+)-TRANSPORTING TWO-SECTOR ATPASE"/>
    <property type="match status" value="1"/>
</dbReference>
<dbReference type="PANTHER" id="PTHR43607">
    <property type="entry name" value="V-TYPE PROTON ATPASE CATALYTIC SUBUNIT A"/>
    <property type="match status" value="1"/>
</dbReference>
<dbReference type="Pfam" id="PF00006">
    <property type="entry name" value="ATP-synt_ab"/>
    <property type="match status" value="1"/>
</dbReference>
<dbReference type="Pfam" id="PF02874">
    <property type="entry name" value="ATP-synt_ab_N"/>
    <property type="match status" value="1"/>
</dbReference>
<dbReference type="Pfam" id="PF16886">
    <property type="entry name" value="ATP-synt_ab_Xtn"/>
    <property type="match status" value="1"/>
</dbReference>
<dbReference type="Pfam" id="PF22919">
    <property type="entry name" value="ATP-synt_VA_C"/>
    <property type="match status" value="1"/>
</dbReference>
<dbReference type="SUPFAM" id="SSF47917">
    <property type="entry name" value="C-terminal domain of alpha and beta subunits of F1 ATP synthase"/>
    <property type="match status" value="1"/>
</dbReference>
<dbReference type="SUPFAM" id="SSF50615">
    <property type="entry name" value="N-terminal domain of alpha and beta subunits of F1 ATP synthase"/>
    <property type="match status" value="1"/>
</dbReference>
<dbReference type="SUPFAM" id="SSF52540">
    <property type="entry name" value="P-loop containing nucleoside triphosphate hydrolases"/>
    <property type="match status" value="1"/>
</dbReference>
<dbReference type="PROSITE" id="PS00152">
    <property type="entry name" value="ATPASE_ALPHA_BETA"/>
    <property type="match status" value="1"/>
</dbReference>
<evidence type="ECO:0000255" key="1">
    <source>
        <dbReference type="HAMAP-Rule" id="MF_00309"/>
    </source>
</evidence>
<name>VATA1_CLOTE</name>
<organism>
    <name type="scientific">Clostridium tetani (strain Massachusetts / E88)</name>
    <dbReference type="NCBI Taxonomy" id="212717"/>
    <lineage>
        <taxon>Bacteria</taxon>
        <taxon>Bacillati</taxon>
        <taxon>Bacillota</taxon>
        <taxon>Clostridia</taxon>
        <taxon>Eubacteriales</taxon>
        <taxon>Clostridiaceae</taxon>
        <taxon>Clostridium</taxon>
    </lineage>
</organism>
<comment type="function">
    <text evidence="1">Produces ATP from ADP in the presence of a proton gradient across the membrane. The V-type alpha chain is a catalytic subunit.</text>
</comment>
<comment type="catalytic activity">
    <reaction evidence="1">
        <text>ATP + H2O + 4 H(+)(in) = ADP + phosphate + 5 H(+)(out)</text>
        <dbReference type="Rhea" id="RHEA:57720"/>
        <dbReference type="ChEBI" id="CHEBI:15377"/>
        <dbReference type="ChEBI" id="CHEBI:15378"/>
        <dbReference type="ChEBI" id="CHEBI:30616"/>
        <dbReference type="ChEBI" id="CHEBI:43474"/>
        <dbReference type="ChEBI" id="CHEBI:456216"/>
        <dbReference type="EC" id="7.1.2.2"/>
    </reaction>
</comment>
<comment type="similarity">
    <text evidence="1">Belongs to the ATPase alpha/beta chains family.</text>
</comment>
<gene>
    <name evidence="1" type="primary">atpA1</name>
    <name type="ordered locus">CTC_00999</name>
</gene>
<proteinExistence type="inferred from homology"/>
<keyword id="KW-0066">ATP synthesis</keyword>
<keyword id="KW-0067">ATP-binding</keyword>
<keyword id="KW-0375">Hydrogen ion transport</keyword>
<keyword id="KW-0406">Ion transport</keyword>
<keyword id="KW-0547">Nucleotide-binding</keyword>
<keyword id="KW-1185">Reference proteome</keyword>
<keyword id="KW-1278">Translocase</keyword>
<keyword id="KW-0813">Transport</keyword>
<feature type="chain" id="PRO_0000322464" description="V-type ATP synthase alpha chain 1">
    <location>
        <begin position="1"/>
        <end position="592"/>
    </location>
</feature>
<feature type="binding site" evidence="1">
    <location>
        <begin position="233"/>
        <end position="240"/>
    </location>
    <ligand>
        <name>ATP</name>
        <dbReference type="ChEBI" id="CHEBI:30616"/>
    </ligand>
</feature>
<sequence length="592" mass="65364">MDLKTGRVVKVSGPLVVAEGMEEANLFDVVRVGDERLIGEIIEMREDKASIQVYEETSGLGPGAPVVTTGAPLSVELGPGLIEAMFDGIQRPLDAIEAKAGDFITRGIDVPSLSREKVWHFNPTKKAGDKVETGDILGLVQETSVIEHRIMVPPGIKGEIISLNEGDYTVIDKIGEIKTDKGIEDLTLMQKWPVRRGRPYKRKLNPSAPMVTGQRVVDTFFPVTKGGTACVPGPFGSGKTVVQHQLAKWADAQIVVYIGCGERGNEMTDVLNEFPELKDPKTGESLMKRTVLIANTSNMPVAAREASIYTGITIGEYFRDMGYSIALMADSTSRWAEALREMSGRLEEMPGEEGYPAYLGSRLAEFYERAGNVICLGQDGREGALTAIGAVSPPGGDLSEPVTQATLRIVKVFWGLDSQLAYRRHFPAINWLNSYSLYLDKVGPWMNENVAEDWVELRQKAMALLQEEANLQEIARLVGIDALSEEDRLKLEVAKSLREDYLQQNAFHDVDTYAPLNKQYRMLKAVLQFGDEARKALESGVYLKDILNLPVRDKIARAKYIDEKDILSIDEISKELTKDIEDLISKGGILDA</sequence>
<accession>Q896K4</accession>
<reference key="1">
    <citation type="journal article" date="2003" name="Proc. Natl. Acad. Sci. U.S.A.">
        <title>The genome sequence of Clostridium tetani, the causative agent of tetanus disease.</title>
        <authorList>
            <person name="Brueggemann H."/>
            <person name="Baeumer S."/>
            <person name="Fricke W.F."/>
            <person name="Wiezer A."/>
            <person name="Liesegang H."/>
            <person name="Decker I."/>
            <person name="Herzberg C."/>
            <person name="Martinez-Arias R."/>
            <person name="Merkl R."/>
            <person name="Henne A."/>
            <person name="Gottschalk G."/>
        </authorList>
    </citation>
    <scope>NUCLEOTIDE SEQUENCE [LARGE SCALE GENOMIC DNA]</scope>
    <source>
        <strain>Massachusetts / E88</strain>
    </source>
</reference>
<protein>
    <recommendedName>
        <fullName evidence="1">V-type ATP synthase alpha chain 1</fullName>
        <ecNumber evidence="1">7.1.2.2</ecNumber>
    </recommendedName>
    <alternativeName>
        <fullName evidence="1">V-ATPase subunit A 1</fullName>
    </alternativeName>
</protein>